<accession>Q7YQL4</accession>
<protein>
    <recommendedName>
        <fullName>Serine/threonine-protein kinase PAK 3</fullName>
        <ecNumber>2.7.11.1</ecNumber>
    </recommendedName>
    <alternativeName>
        <fullName>Beta-PAK</fullName>
    </alternativeName>
    <alternativeName>
        <fullName>p21-activated kinase 3</fullName>
        <shortName>PAK-3</shortName>
    </alternativeName>
</protein>
<feature type="chain" id="PRO_0000086471" description="Serine/threonine-protein kinase PAK 3">
    <location>
        <begin position="1"/>
        <end position="559"/>
    </location>
</feature>
<feature type="domain" description="CRIB" evidence="5">
    <location>
        <begin position="70"/>
        <end position="83"/>
    </location>
</feature>
<feature type="domain" description="Protein kinase" evidence="6">
    <location>
        <begin position="283"/>
        <end position="534"/>
    </location>
</feature>
<feature type="region of interest" description="Disordered" evidence="8">
    <location>
        <begin position="1"/>
        <end position="72"/>
    </location>
</feature>
<feature type="region of interest" description="Autoregulatory region" evidence="1">
    <location>
        <begin position="65"/>
        <end position="150"/>
    </location>
</feature>
<feature type="region of interest" description="GTPase-binding" evidence="1">
    <location>
        <begin position="65"/>
        <end position="123"/>
    </location>
</feature>
<feature type="region of interest" description="Linker">
    <location>
        <begin position="84"/>
        <end position="282"/>
    </location>
</feature>
<feature type="region of interest" description="Disordered" evidence="8">
    <location>
        <begin position="164"/>
        <end position="212"/>
    </location>
</feature>
<feature type="region of interest" description="Disordered" evidence="8">
    <location>
        <begin position="228"/>
        <end position="262"/>
    </location>
</feature>
<feature type="compositionally biased region" description="Polar residues" evidence="8">
    <location>
        <begin position="18"/>
        <end position="32"/>
    </location>
</feature>
<feature type="compositionally biased region" description="Basic and acidic residues" evidence="8">
    <location>
        <begin position="63"/>
        <end position="72"/>
    </location>
</feature>
<feature type="compositionally biased region" description="Acidic residues" evidence="8">
    <location>
        <begin position="186"/>
        <end position="201"/>
    </location>
</feature>
<feature type="compositionally biased region" description="Polar residues" evidence="8">
    <location>
        <begin position="239"/>
        <end position="250"/>
    </location>
</feature>
<feature type="active site" description="Proton acceptor" evidence="6 7">
    <location>
        <position position="402"/>
    </location>
</feature>
<feature type="binding site" evidence="6">
    <location>
        <begin position="289"/>
        <end position="297"/>
    </location>
    <ligand>
        <name>ATP</name>
        <dbReference type="ChEBI" id="CHEBI:30616"/>
    </ligand>
</feature>
<feature type="binding site" evidence="6">
    <location>
        <position position="312"/>
    </location>
    <ligand>
        <name>ATP</name>
        <dbReference type="ChEBI" id="CHEBI:30616"/>
    </ligand>
</feature>
<feature type="modified residue" description="Phosphoserine" evidence="4">
    <location>
        <position position="2"/>
    </location>
</feature>
<feature type="modified residue" description="Phosphoserine; by autocatalysis" evidence="4">
    <location>
        <position position="50"/>
    </location>
</feature>
<feature type="modified residue" description="Phosphoserine; by autocatalysis" evidence="4">
    <location>
        <position position="154"/>
    </location>
</feature>
<feature type="modified residue" description="Phosphoserine" evidence="3">
    <location>
        <position position="186"/>
    </location>
</feature>
<feature type="modified residue" description="Phosphothreonine; by autocatalysis" evidence="4">
    <location>
        <position position="436"/>
    </location>
</feature>
<gene>
    <name type="primary">PAK3</name>
</gene>
<sequence>MSDGLDNEEKPPAPPLRMNSNNRDSSALNHSSKPLPMAPEEKNKKARLRSIFPGGGDKTNKKKEKERPEISLPSDFEHTIHVGFDAVTGEFTPDLYGSQMCPGKLPEGIPEQWARLLQTSNITKLEQKKNPQAVLDVLKFYDSKETVNNQKYMSFTSGDKSAHGYIAAHPSSTKTASEPPLAPPVSEEEDEEEEEEEDENEPPPVIAPRPEHTKSIYTRSVVESIASPAVPNKEVTPPSAENANSSTLYRNTDRQRKKSKMTDEEILEKLRSIVSVGDPKKKYTRFEKIGQGASGTVYTALDIATGQEVAIKQMNLQQQPKKELIINEILVMRENKNPNIVNYLDSYLVGDELWVVMEYLAGGSLTDVVTETCMDEGQIAAVCRECLQALDFLHSNQVIHRDIKSDNILLGMDGSVKLTDFGFCAQITPEQSKRSTMVGTPYWMAPEVVTRKAYGPKVDIWSLGIMAIEMVEGEPPYLNENPLRALYLIATNGTPELQNPERLSAVFRDFLNRCLEMDVDRRGSAKELLQHPFLKLAKPLSSLTPLIIAAKEAIKNSSR</sequence>
<organism>
    <name type="scientific">Pan troglodytes</name>
    <name type="common">Chimpanzee</name>
    <dbReference type="NCBI Taxonomy" id="9598"/>
    <lineage>
        <taxon>Eukaryota</taxon>
        <taxon>Metazoa</taxon>
        <taxon>Chordata</taxon>
        <taxon>Craniata</taxon>
        <taxon>Vertebrata</taxon>
        <taxon>Euteleostomi</taxon>
        <taxon>Mammalia</taxon>
        <taxon>Eutheria</taxon>
        <taxon>Euarchontoglires</taxon>
        <taxon>Primates</taxon>
        <taxon>Haplorrhini</taxon>
        <taxon>Catarrhini</taxon>
        <taxon>Hominidae</taxon>
        <taxon>Pan</taxon>
    </lineage>
</organism>
<evidence type="ECO:0000250" key="1"/>
<evidence type="ECO:0000250" key="2">
    <source>
        <dbReference type="UniProtKB" id="O75914"/>
    </source>
</evidence>
<evidence type="ECO:0000250" key="3">
    <source>
        <dbReference type="UniProtKB" id="Q61036"/>
    </source>
</evidence>
<evidence type="ECO:0000250" key="4">
    <source>
        <dbReference type="UniProtKB" id="Q62829"/>
    </source>
</evidence>
<evidence type="ECO:0000255" key="5">
    <source>
        <dbReference type="PROSITE-ProRule" id="PRU00057"/>
    </source>
</evidence>
<evidence type="ECO:0000255" key="6">
    <source>
        <dbReference type="PROSITE-ProRule" id="PRU00159"/>
    </source>
</evidence>
<evidence type="ECO:0000255" key="7">
    <source>
        <dbReference type="PROSITE-ProRule" id="PRU10027"/>
    </source>
</evidence>
<evidence type="ECO:0000256" key="8">
    <source>
        <dbReference type="SAM" id="MobiDB-lite"/>
    </source>
</evidence>
<evidence type="ECO:0000305" key="9"/>
<proteinExistence type="evidence at transcript level"/>
<reference key="1">
    <citation type="journal article" date="2003" name="Mol. Biol. Evol.">
        <title>Gene diversity patterns at 10 X-chromosomal loci in humans and chimpanzees.</title>
        <authorList>
            <person name="Kitano T."/>
            <person name="Schwarz C."/>
            <person name="Nickel B."/>
            <person name="Paeaebo S."/>
        </authorList>
    </citation>
    <scope>NUCLEOTIDE SEQUENCE [MRNA]</scope>
</reference>
<name>PAK3_PANTR</name>
<keyword id="KW-0021">Allosteric enzyme</keyword>
<keyword id="KW-0067">ATP-binding</keyword>
<keyword id="KW-0963">Cytoplasm</keyword>
<keyword id="KW-0217">Developmental protein</keyword>
<keyword id="KW-0418">Kinase</keyword>
<keyword id="KW-0460">Magnesium</keyword>
<keyword id="KW-0479">Metal-binding</keyword>
<keyword id="KW-0547">Nucleotide-binding</keyword>
<keyword id="KW-0597">Phosphoprotein</keyword>
<keyword id="KW-1185">Reference proteome</keyword>
<keyword id="KW-0723">Serine/threonine-protein kinase</keyword>
<keyword id="KW-0729">SH3-binding</keyword>
<keyword id="KW-0808">Transferase</keyword>
<keyword id="KW-0832">Ubl conjugation</keyword>
<dbReference type="EC" id="2.7.11.1"/>
<dbReference type="EMBL" id="AB102660">
    <property type="protein sequence ID" value="BAC81129.1"/>
    <property type="molecule type" value="mRNA"/>
</dbReference>
<dbReference type="RefSeq" id="NP_001009039.1">
    <property type="nucleotide sequence ID" value="NM_001009039.1"/>
</dbReference>
<dbReference type="RefSeq" id="XP_009437779.1">
    <property type="nucleotide sequence ID" value="XM_009439504.5"/>
</dbReference>
<dbReference type="RefSeq" id="XP_009437780.1">
    <property type="nucleotide sequence ID" value="XM_009439505.5"/>
</dbReference>
<dbReference type="RefSeq" id="XP_009437781.1">
    <property type="nucleotide sequence ID" value="XM_009439506.5"/>
</dbReference>
<dbReference type="RefSeq" id="XP_009437782.1">
    <property type="nucleotide sequence ID" value="XM_009439507.5"/>
</dbReference>
<dbReference type="RefSeq" id="XP_009437783.1">
    <property type="nucleotide sequence ID" value="XM_009439508.5"/>
</dbReference>
<dbReference type="RefSeq" id="XP_009437785.1">
    <property type="nucleotide sequence ID" value="XM_009439510.5"/>
</dbReference>
<dbReference type="RefSeq" id="XP_009437786.1">
    <property type="nucleotide sequence ID" value="XM_009439511.5"/>
</dbReference>
<dbReference type="RefSeq" id="XP_009437787.1">
    <property type="nucleotide sequence ID" value="XM_009439512.5"/>
</dbReference>
<dbReference type="RefSeq" id="XP_009437788.1">
    <property type="nucleotide sequence ID" value="XM_009439513.5"/>
</dbReference>
<dbReference type="RefSeq" id="XP_009437789.1">
    <property type="nucleotide sequence ID" value="XM_009439514.5"/>
</dbReference>
<dbReference type="RefSeq" id="XP_009437790.1">
    <property type="nucleotide sequence ID" value="XM_009439515.5"/>
</dbReference>
<dbReference type="RefSeq" id="XP_016798113.1">
    <property type="nucleotide sequence ID" value="XM_016942624.1"/>
</dbReference>
<dbReference type="RefSeq" id="XP_016798114.1">
    <property type="nucleotide sequence ID" value="XM_016942625.1"/>
</dbReference>
<dbReference type="RefSeq" id="XP_054532159.1">
    <property type="nucleotide sequence ID" value="XM_054676184.2"/>
</dbReference>
<dbReference type="RefSeq" id="XP_063659847.1">
    <property type="nucleotide sequence ID" value="XM_063803777.1"/>
</dbReference>
<dbReference type="RefSeq" id="XP_063659848.1">
    <property type="nucleotide sequence ID" value="XM_063803778.1"/>
</dbReference>
<dbReference type="SMR" id="Q7YQL4"/>
<dbReference type="FunCoup" id="Q7YQL4">
    <property type="interactions" value="1501"/>
</dbReference>
<dbReference type="STRING" id="9598.ENSPTRP00000062580"/>
<dbReference type="PaxDb" id="9598-ENSPTRP00000041645"/>
<dbReference type="Ensembl" id="ENSPTRT00000042397.4">
    <property type="protein sequence ID" value="ENSPTRP00000041645.3"/>
    <property type="gene ID" value="ENSPTRG00000022187.7"/>
</dbReference>
<dbReference type="Ensembl" id="ENSPTRT00000079025.1">
    <property type="protein sequence ID" value="ENSPTRP00000092335.1"/>
    <property type="gene ID" value="ENSPTRG00000022187.7"/>
</dbReference>
<dbReference type="GeneID" id="450118"/>
<dbReference type="CTD" id="5063"/>
<dbReference type="VGNC" id="VGNC:10463">
    <property type="gene designation" value="PAK3"/>
</dbReference>
<dbReference type="eggNOG" id="KOG0578">
    <property type="taxonomic scope" value="Eukaryota"/>
</dbReference>
<dbReference type="GeneTree" id="ENSGT00950000182988"/>
<dbReference type="HOGENOM" id="CLU_000288_26_6_1"/>
<dbReference type="InParanoid" id="Q7YQL4"/>
<dbReference type="TreeFam" id="TF105351"/>
<dbReference type="Proteomes" id="UP000002277">
    <property type="component" value="Chromosome X"/>
</dbReference>
<dbReference type="Bgee" id="ENSPTRG00000022187">
    <property type="expression patterns" value="Expressed in pituitary gland and 13 other cell types or tissues"/>
</dbReference>
<dbReference type="GO" id="GO:0005737">
    <property type="term" value="C:cytoplasm"/>
    <property type="evidence" value="ECO:0000318"/>
    <property type="project" value="GO_Central"/>
</dbReference>
<dbReference type="GO" id="GO:0005524">
    <property type="term" value="F:ATP binding"/>
    <property type="evidence" value="ECO:0007669"/>
    <property type="project" value="UniProtKB-KW"/>
</dbReference>
<dbReference type="GO" id="GO:0004708">
    <property type="term" value="F:MAP kinase kinase activity"/>
    <property type="evidence" value="ECO:0000250"/>
    <property type="project" value="UniProtKB"/>
</dbReference>
<dbReference type="GO" id="GO:0046872">
    <property type="term" value="F:metal ion binding"/>
    <property type="evidence" value="ECO:0007669"/>
    <property type="project" value="UniProtKB-KW"/>
</dbReference>
<dbReference type="GO" id="GO:0106310">
    <property type="term" value="F:protein serine kinase activity"/>
    <property type="evidence" value="ECO:0007669"/>
    <property type="project" value="RHEA"/>
</dbReference>
<dbReference type="GO" id="GO:0004674">
    <property type="term" value="F:protein serine/threonine kinase activity"/>
    <property type="evidence" value="ECO:0000318"/>
    <property type="project" value="GO_Central"/>
</dbReference>
<dbReference type="GO" id="GO:0017124">
    <property type="term" value="F:SH3 domain binding"/>
    <property type="evidence" value="ECO:0007669"/>
    <property type="project" value="UniProtKB-KW"/>
</dbReference>
<dbReference type="GO" id="GO:0007409">
    <property type="term" value="P:axonogenesis"/>
    <property type="evidence" value="ECO:0000250"/>
    <property type="project" value="UniProtKB"/>
</dbReference>
<dbReference type="GO" id="GO:0016477">
    <property type="term" value="P:cell migration"/>
    <property type="evidence" value="ECO:0000318"/>
    <property type="project" value="GO_Central"/>
</dbReference>
<dbReference type="GO" id="GO:0009267">
    <property type="term" value="P:cellular response to starvation"/>
    <property type="evidence" value="ECO:0000318"/>
    <property type="project" value="GO_Central"/>
</dbReference>
<dbReference type="GO" id="GO:0016358">
    <property type="term" value="P:dendrite development"/>
    <property type="evidence" value="ECO:0000250"/>
    <property type="project" value="UniProtKB"/>
</dbReference>
<dbReference type="GO" id="GO:0060997">
    <property type="term" value="P:dendritic spine morphogenesis"/>
    <property type="evidence" value="ECO:0000250"/>
    <property type="project" value="UniProtKB"/>
</dbReference>
<dbReference type="GO" id="GO:0035556">
    <property type="term" value="P:intracellular signal transduction"/>
    <property type="evidence" value="ECO:0000318"/>
    <property type="project" value="GO_Central"/>
</dbReference>
<dbReference type="GO" id="GO:0032956">
    <property type="term" value="P:regulation of actin cytoskeleton organization"/>
    <property type="evidence" value="ECO:0000318"/>
    <property type="project" value="GO_Central"/>
</dbReference>
<dbReference type="GO" id="GO:0030833">
    <property type="term" value="P:regulation of actin filament polymerization"/>
    <property type="evidence" value="ECO:0000250"/>
    <property type="project" value="UniProtKB"/>
</dbReference>
<dbReference type="GO" id="GO:0050770">
    <property type="term" value="P:regulation of axonogenesis"/>
    <property type="evidence" value="ECO:0000318"/>
    <property type="project" value="GO_Central"/>
</dbReference>
<dbReference type="GO" id="GO:0043408">
    <property type="term" value="P:regulation of MAPK cascade"/>
    <property type="evidence" value="ECO:0000318"/>
    <property type="project" value="GO_Central"/>
</dbReference>
<dbReference type="CDD" id="cd01093">
    <property type="entry name" value="CRIB_PAK_like"/>
    <property type="match status" value="1"/>
</dbReference>
<dbReference type="CDD" id="cd06656">
    <property type="entry name" value="STKc_PAK3"/>
    <property type="match status" value="1"/>
</dbReference>
<dbReference type="FunFam" id="1.10.510.10:FF:000011">
    <property type="entry name" value="Non-specific serine/threonine protein kinase"/>
    <property type="match status" value="1"/>
</dbReference>
<dbReference type="FunFam" id="3.30.200.20:FF:000069">
    <property type="entry name" value="Non-specific serine/threonine protein kinase"/>
    <property type="match status" value="1"/>
</dbReference>
<dbReference type="FunFam" id="3.90.810.10:FF:000001">
    <property type="entry name" value="Non-specific serine/threonine protein kinase"/>
    <property type="match status" value="1"/>
</dbReference>
<dbReference type="Gene3D" id="3.90.810.10">
    <property type="entry name" value="CRIB domain"/>
    <property type="match status" value="1"/>
</dbReference>
<dbReference type="Gene3D" id="3.30.200.20">
    <property type="entry name" value="Phosphorylase Kinase, domain 1"/>
    <property type="match status" value="1"/>
</dbReference>
<dbReference type="Gene3D" id="1.10.510.10">
    <property type="entry name" value="Transferase(Phosphotransferase) domain 1"/>
    <property type="match status" value="1"/>
</dbReference>
<dbReference type="InterPro" id="IPR000095">
    <property type="entry name" value="CRIB_dom"/>
</dbReference>
<dbReference type="InterPro" id="IPR036936">
    <property type="entry name" value="CRIB_dom_sf"/>
</dbReference>
<dbReference type="InterPro" id="IPR011009">
    <property type="entry name" value="Kinase-like_dom_sf"/>
</dbReference>
<dbReference type="InterPro" id="IPR051931">
    <property type="entry name" value="PAK3-like"/>
</dbReference>
<dbReference type="InterPro" id="IPR033923">
    <property type="entry name" value="PAK_BD"/>
</dbReference>
<dbReference type="InterPro" id="IPR000719">
    <property type="entry name" value="Prot_kinase_dom"/>
</dbReference>
<dbReference type="InterPro" id="IPR017441">
    <property type="entry name" value="Protein_kinase_ATP_BS"/>
</dbReference>
<dbReference type="InterPro" id="IPR008271">
    <property type="entry name" value="Ser/Thr_kinase_AS"/>
</dbReference>
<dbReference type="InterPro" id="IPR035063">
    <property type="entry name" value="STK_PAK3"/>
</dbReference>
<dbReference type="PANTHER" id="PTHR45832">
    <property type="entry name" value="SERINE/THREONINE-PROTEIN KINASE SAMKA-RELATED-RELATED"/>
    <property type="match status" value="1"/>
</dbReference>
<dbReference type="PANTHER" id="PTHR45832:SF11">
    <property type="entry name" value="SERINE_THREONINE-PROTEIN KINASE PAK 3"/>
    <property type="match status" value="1"/>
</dbReference>
<dbReference type="Pfam" id="PF00786">
    <property type="entry name" value="PBD"/>
    <property type="match status" value="1"/>
</dbReference>
<dbReference type="Pfam" id="PF00069">
    <property type="entry name" value="Pkinase"/>
    <property type="match status" value="1"/>
</dbReference>
<dbReference type="SMART" id="SM00285">
    <property type="entry name" value="PBD"/>
    <property type="match status" value="1"/>
</dbReference>
<dbReference type="SMART" id="SM00220">
    <property type="entry name" value="S_TKc"/>
    <property type="match status" value="1"/>
</dbReference>
<dbReference type="SUPFAM" id="SSF56112">
    <property type="entry name" value="Protein kinase-like (PK-like)"/>
    <property type="match status" value="1"/>
</dbReference>
<dbReference type="PROSITE" id="PS50108">
    <property type="entry name" value="CRIB"/>
    <property type="match status" value="1"/>
</dbReference>
<dbReference type="PROSITE" id="PS00107">
    <property type="entry name" value="PROTEIN_KINASE_ATP"/>
    <property type="match status" value="1"/>
</dbReference>
<dbReference type="PROSITE" id="PS50011">
    <property type="entry name" value="PROTEIN_KINASE_DOM"/>
    <property type="match status" value="1"/>
</dbReference>
<dbReference type="PROSITE" id="PS00108">
    <property type="entry name" value="PROTEIN_KINASE_ST"/>
    <property type="match status" value="1"/>
</dbReference>
<comment type="function">
    <text evidence="1 3">Serine/threonine protein kinase that plays a role in a variety of different signaling pathways including cytoskeleton regulation, cell migration, or cell cycle regulation. Plays a role in dendrite spine morphogenesis as well as synapse formation and plasticity. Acts as a downstream effector of the small GTPases CDC42 and RAC1. Activation by the binding of active CDC42 and RAC1 results in a conformational change and a subsequent autophosphorylation on several serine and/or threonine residues. Phosphorylates MAPK4 and MAPK6 and activates the downstream target MAPKAPK5, a regulator of F-actin polymerization and cell migration. Additionally, phosphorylates TNNI3/troponin I to modulate calcium sensitivity and relaxation kinetics of thin myofilaments. May also be involved in early neuronal development (By similarity). In hippocampal neurons, necessary for the formation of dendritic spines and excitatory synapses; this function is dependent on kinase activity and may be exerted by the regulation of actomyosin contractility through the phosphorylation of myosin II regulatory light chain (MLC) (By similarity).</text>
</comment>
<comment type="catalytic activity">
    <reaction>
        <text>L-seryl-[protein] + ATP = O-phospho-L-seryl-[protein] + ADP + H(+)</text>
        <dbReference type="Rhea" id="RHEA:17989"/>
        <dbReference type="Rhea" id="RHEA-COMP:9863"/>
        <dbReference type="Rhea" id="RHEA-COMP:11604"/>
        <dbReference type="ChEBI" id="CHEBI:15378"/>
        <dbReference type="ChEBI" id="CHEBI:29999"/>
        <dbReference type="ChEBI" id="CHEBI:30616"/>
        <dbReference type="ChEBI" id="CHEBI:83421"/>
        <dbReference type="ChEBI" id="CHEBI:456216"/>
        <dbReference type="EC" id="2.7.11.1"/>
    </reaction>
</comment>
<comment type="catalytic activity">
    <reaction>
        <text>L-threonyl-[protein] + ATP = O-phospho-L-threonyl-[protein] + ADP + H(+)</text>
        <dbReference type="Rhea" id="RHEA:46608"/>
        <dbReference type="Rhea" id="RHEA-COMP:11060"/>
        <dbReference type="Rhea" id="RHEA-COMP:11605"/>
        <dbReference type="ChEBI" id="CHEBI:15378"/>
        <dbReference type="ChEBI" id="CHEBI:30013"/>
        <dbReference type="ChEBI" id="CHEBI:30616"/>
        <dbReference type="ChEBI" id="CHEBI:61977"/>
        <dbReference type="ChEBI" id="CHEBI:456216"/>
        <dbReference type="EC" id="2.7.11.1"/>
    </reaction>
</comment>
<comment type="cofactor">
    <cofactor evidence="1">
        <name>Mg(2+)</name>
        <dbReference type="ChEBI" id="CHEBI:18420"/>
    </cofactor>
</comment>
<comment type="activity regulation">
    <text evidence="1">Activated by binding small G proteins. Binding of GTP-bound CDC42 or RAC1 to the autoregulatory region releases monomers from the autoinhibited dimer, enables phosphorylation of Thr-436 and allows the kinase domain to adopt an active structure (By similarity).</text>
</comment>
<comment type="subunit">
    <text evidence="1 2">Interacts tightly with GTP-bound but not GDP-bound CDC42/p21 and RAC1. Shows highly specific binding to the SH3 domains of phospholipase C-gamma and of adapter protein NCK. Interacts with the C-terminal of APP. Interacts with ARHGEF6 and ARHGEF7 (By similarity). Interacts with GIT1 and GIT2 (By similarity).</text>
</comment>
<comment type="subcellular location">
    <subcellularLocation>
        <location evidence="1">Cytoplasm</location>
    </subcellularLocation>
</comment>
<comment type="PTM">
    <text evidence="1">Autophosphorylated when activated by CDC42/p21.</text>
</comment>
<comment type="PTM">
    <text evidence="1">Neddylated.</text>
</comment>
<comment type="similarity">
    <text evidence="9">Belongs to the protein kinase superfamily. STE Ser/Thr protein kinase family. STE20 subfamily.</text>
</comment>